<keyword id="KW-1185">Reference proteome</keyword>
<keyword id="KW-0687">Ribonucleoprotein</keyword>
<keyword id="KW-0689">Ribosomal protein</keyword>
<keyword id="KW-0694">RNA-binding</keyword>
<keyword id="KW-0699">rRNA-binding</keyword>
<reference key="1">
    <citation type="journal article" date="2015" name="Genome Announc.">
        <title>Complete genome sequence of Anaeromyxobacter sp. Fw109-5, an anaerobic, metal-reducing bacterium isolated from a contaminated subsurface environment.</title>
        <authorList>
            <person name="Hwang C."/>
            <person name="Copeland A."/>
            <person name="Lucas S."/>
            <person name="Lapidus A."/>
            <person name="Barry K."/>
            <person name="Glavina Del Rio T."/>
            <person name="Dalin E."/>
            <person name="Tice H."/>
            <person name="Pitluck S."/>
            <person name="Sims D."/>
            <person name="Brettin T."/>
            <person name="Bruce D.C."/>
            <person name="Detter J.C."/>
            <person name="Han C.S."/>
            <person name="Schmutz J."/>
            <person name="Larimer F.W."/>
            <person name="Land M.L."/>
            <person name="Hauser L.J."/>
            <person name="Kyrpides N."/>
            <person name="Lykidis A."/>
            <person name="Richardson P."/>
            <person name="Belieav A."/>
            <person name="Sanford R.A."/>
            <person name="Loeffler F.E."/>
            <person name="Fields M.W."/>
        </authorList>
    </citation>
    <scope>NUCLEOTIDE SEQUENCE [LARGE SCALE GENOMIC DNA]</scope>
    <source>
        <strain>Fw109-5</strain>
    </source>
</reference>
<dbReference type="EMBL" id="CP000769">
    <property type="protein sequence ID" value="ABS26129.1"/>
    <property type="molecule type" value="Genomic_DNA"/>
</dbReference>
<dbReference type="RefSeq" id="WP_012096708.1">
    <property type="nucleotide sequence ID" value="NC_009675.1"/>
</dbReference>
<dbReference type="SMR" id="A7HBN3"/>
<dbReference type="STRING" id="404589.Anae109_1926"/>
<dbReference type="KEGG" id="afw:Anae109_1926"/>
<dbReference type="eggNOG" id="COG0097">
    <property type="taxonomic scope" value="Bacteria"/>
</dbReference>
<dbReference type="HOGENOM" id="CLU_065464_1_2_7"/>
<dbReference type="OrthoDB" id="9805007at2"/>
<dbReference type="Proteomes" id="UP000006382">
    <property type="component" value="Chromosome"/>
</dbReference>
<dbReference type="GO" id="GO:0022625">
    <property type="term" value="C:cytosolic large ribosomal subunit"/>
    <property type="evidence" value="ECO:0007669"/>
    <property type="project" value="TreeGrafter"/>
</dbReference>
<dbReference type="GO" id="GO:0019843">
    <property type="term" value="F:rRNA binding"/>
    <property type="evidence" value="ECO:0007669"/>
    <property type="project" value="UniProtKB-UniRule"/>
</dbReference>
<dbReference type="GO" id="GO:0003735">
    <property type="term" value="F:structural constituent of ribosome"/>
    <property type="evidence" value="ECO:0007669"/>
    <property type="project" value="InterPro"/>
</dbReference>
<dbReference type="GO" id="GO:0002181">
    <property type="term" value="P:cytoplasmic translation"/>
    <property type="evidence" value="ECO:0007669"/>
    <property type="project" value="TreeGrafter"/>
</dbReference>
<dbReference type="FunFam" id="3.90.930.12:FF:000001">
    <property type="entry name" value="50S ribosomal protein L6"/>
    <property type="match status" value="1"/>
</dbReference>
<dbReference type="FunFam" id="3.90.930.12:FF:000002">
    <property type="entry name" value="50S ribosomal protein L6"/>
    <property type="match status" value="1"/>
</dbReference>
<dbReference type="Gene3D" id="3.90.930.12">
    <property type="entry name" value="Ribosomal protein L6, alpha-beta domain"/>
    <property type="match status" value="2"/>
</dbReference>
<dbReference type="HAMAP" id="MF_01365_B">
    <property type="entry name" value="Ribosomal_uL6_B"/>
    <property type="match status" value="1"/>
</dbReference>
<dbReference type="InterPro" id="IPR000702">
    <property type="entry name" value="Ribosomal_uL6-like"/>
</dbReference>
<dbReference type="InterPro" id="IPR036789">
    <property type="entry name" value="Ribosomal_uL6-like_a/b-dom_sf"/>
</dbReference>
<dbReference type="InterPro" id="IPR020040">
    <property type="entry name" value="Ribosomal_uL6_a/b-dom"/>
</dbReference>
<dbReference type="InterPro" id="IPR019906">
    <property type="entry name" value="Ribosomal_uL6_bac-type"/>
</dbReference>
<dbReference type="InterPro" id="IPR002358">
    <property type="entry name" value="Ribosomal_uL6_CS"/>
</dbReference>
<dbReference type="NCBIfam" id="TIGR03654">
    <property type="entry name" value="L6_bact"/>
    <property type="match status" value="1"/>
</dbReference>
<dbReference type="PANTHER" id="PTHR11655">
    <property type="entry name" value="60S/50S RIBOSOMAL PROTEIN L6/L9"/>
    <property type="match status" value="1"/>
</dbReference>
<dbReference type="PANTHER" id="PTHR11655:SF14">
    <property type="entry name" value="LARGE RIBOSOMAL SUBUNIT PROTEIN UL6M"/>
    <property type="match status" value="1"/>
</dbReference>
<dbReference type="Pfam" id="PF00347">
    <property type="entry name" value="Ribosomal_L6"/>
    <property type="match status" value="2"/>
</dbReference>
<dbReference type="PIRSF" id="PIRSF002162">
    <property type="entry name" value="Ribosomal_L6"/>
    <property type="match status" value="1"/>
</dbReference>
<dbReference type="PRINTS" id="PR00059">
    <property type="entry name" value="RIBOSOMALL6"/>
</dbReference>
<dbReference type="SUPFAM" id="SSF56053">
    <property type="entry name" value="Ribosomal protein L6"/>
    <property type="match status" value="2"/>
</dbReference>
<dbReference type="PROSITE" id="PS00525">
    <property type="entry name" value="RIBOSOMAL_L6_1"/>
    <property type="match status" value="1"/>
</dbReference>
<protein>
    <recommendedName>
        <fullName evidence="1">Large ribosomal subunit protein uL6</fullName>
    </recommendedName>
    <alternativeName>
        <fullName evidence="2">50S ribosomal protein L6</fullName>
    </alternativeName>
</protein>
<organism>
    <name type="scientific">Anaeromyxobacter sp. (strain Fw109-5)</name>
    <dbReference type="NCBI Taxonomy" id="404589"/>
    <lineage>
        <taxon>Bacteria</taxon>
        <taxon>Pseudomonadati</taxon>
        <taxon>Myxococcota</taxon>
        <taxon>Myxococcia</taxon>
        <taxon>Myxococcales</taxon>
        <taxon>Cystobacterineae</taxon>
        <taxon>Anaeromyxobacteraceae</taxon>
        <taxon>Anaeromyxobacter</taxon>
    </lineage>
</organism>
<evidence type="ECO:0000255" key="1">
    <source>
        <dbReference type="HAMAP-Rule" id="MF_01365"/>
    </source>
</evidence>
<evidence type="ECO:0000305" key="2"/>
<gene>
    <name evidence="1" type="primary">rplF</name>
    <name type="ordered locus">Anae109_1926</name>
</gene>
<sequence length="180" mass="19424">MSRIGKLPVKIPEKVKVSVDGNLVKVEGPKGKMSFPTNPRVKVAVDKGEVQVTRPDDSPESKGLHGLTRTLVKNALDGVVKGYERGLEINGVGFKAEVKGKEIHFALGFSHPVVFKLPEGVTAEVDAKQTKLTVKGVDKHVLGLTAAKIRALRPPEPYKGKGIKYAEEIIRRKEGKTGAA</sequence>
<feature type="chain" id="PRO_1000055191" description="Large ribosomal subunit protein uL6">
    <location>
        <begin position="1"/>
        <end position="180"/>
    </location>
</feature>
<accession>A7HBN3</accession>
<comment type="function">
    <text evidence="1">This protein binds to the 23S rRNA, and is important in its secondary structure. It is located near the subunit interface in the base of the L7/L12 stalk, and near the tRNA binding site of the peptidyltransferase center.</text>
</comment>
<comment type="subunit">
    <text evidence="1">Part of the 50S ribosomal subunit.</text>
</comment>
<comment type="similarity">
    <text evidence="1">Belongs to the universal ribosomal protein uL6 family.</text>
</comment>
<proteinExistence type="inferred from homology"/>
<name>RL6_ANADF</name>